<dbReference type="EC" id="3.1.1.3"/>
<dbReference type="EMBL" id="X53053">
    <property type="protein sequence ID" value="CAA37220.1"/>
    <property type="molecule type" value="Genomic_DNA"/>
</dbReference>
<dbReference type="PIR" id="S12104">
    <property type="entry name" value="S12104"/>
</dbReference>
<dbReference type="PDB" id="8SPK">
    <property type="method" value="X-ray"/>
    <property type="resolution" value="1.60 A"/>
    <property type="chains" value="A/B=59-319"/>
</dbReference>
<dbReference type="PDBsum" id="8SPK"/>
<dbReference type="SMR" id="P19833"/>
<dbReference type="ESTHER" id="morsp-lip1">
    <property type="family name" value="Polyesterase-lipase-cutinase"/>
</dbReference>
<dbReference type="GO" id="GO:0046872">
    <property type="term" value="F:metal ion binding"/>
    <property type="evidence" value="ECO:0007669"/>
    <property type="project" value="UniProtKB-KW"/>
</dbReference>
<dbReference type="GO" id="GO:0004806">
    <property type="term" value="F:triacylglycerol lipase activity"/>
    <property type="evidence" value="ECO:0007669"/>
    <property type="project" value="UniProtKB-EC"/>
</dbReference>
<dbReference type="GO" id="GO:0016042">
    <property type="term" value="P:lipid catabolic process"/>
    <property type="evidence" value="ECO:0007669"/>
    <property type="project" value="UniProtKB-KW"/>
</dbReference>
<dbReference type="Gene3D" id="3.40.50.1820">
    <property type="entry name" value="alpha/beta hydrolase"/>
    <property type="match status" value="1"/>
</dbReference>
<dbReference type="InterPro" id="IPR029058">
    <property type="entry name" value="AB_hydrolase_fold"/>
</dbReference>
<dbReference type="InterPro" id="IPR050261">
    <property type="entry name" value="FrsA_esterase"/>
</dbReference>
<dbReference type="InterPro" id="IPR041127">
    <property type="entry name" value="PET_hydrolase/cutinase-like"/>
</dbReference>
<dbReference type="PANTHER" id="PTHR22946">
    <property type="entry name" value="DIENELACTONE HYDROLASE DOMAIN-CONTAINING PROTEIN-RELATED"/>
    <property type="match status" value="1"/>
</dbReference>
<dbReference type="PANTHER" id="PTHR22946:SF9">
    <property type="entry name" value="POLYKETIDE TRANSFERASE AF380"/>
    <property type="match status" value="1"/>
</dbReference>
<dbReference type="Pfam" id="PF12740">
    <property type="entry name" value="PETase"/>
    <property type="match status" value="1"/>
</dbReference>
<dbReference type="SUPFAM" id="SSF53474">
    <property type="entry name" value="alpha/beta-Hydrolases"/>
    <property type="match status" value="1"/>
</dbReference>
<feature type="chain" id="PRO_0000090352" description="Lipase 1">
    <location>
        <begin position="1"/>
        <end position="319"/>
    </location>
</feature>
<feature type="active site" description="Nucleophile" evidence="1">
    <location>
        <position position="189"/>
    </location>
</feature>
<feature type="binding site" evidence="1">
    <location>
        <position position="314"/>
    </location>
    <ligand>
        <name>Ca(2+)</name>
        <dbReference type="ChEBI" id="CHEBI:29108"/>
    </ligand>
</feature>
<feature type="binding site" evidence="1">
    <location>
        <position position="317"/>
    </location>
    <ligand>
        <name>Ca(2+)</name>
        <dbReference type="ChEBI" id="CHEBI:29108"/>
    </ligand>
</feature>
<feature type="helix" evidence="2">
    <location>
        <begin position="63"/>
        <end position="65"/>
    </location>
</feature>
<feature type="helix" evidence="2">
    <location>
        <begin position="68"/>
        <end position="71"/>
    </location>
</feature>
<feature type="strand" evidence="2">
    <location>
        <begin position="78"/>
        <end position="80"/>
    </location>
</feature>
<feature type="strand" evidence="2">
    <location>
        <begin position="82"/>
        <end position="87"/>
    </location>
</feature>
<feature type="turn" evidence="2">
    <location>
        <begin position="89"/>
        <end position="91"/>
    </location>
</feature>
<feature type="strand" evidence="2">
    <location>
        <begin position="93"/>
        <end position="95"/>
    </location>
</feature>
<feature type="strand" evidence="2">
    <location>
        <begin position="98"/>
        <end position="105"/>
    </location>
</feature>
<feature type="helix" evidence="2">
    <location>
        <begin position="107"/>
        <end position="109"/>
    </location>
</feature>
<feature type="strand" evidence="2">
    <location>
        <begin position="111"/>
        <end position="118"/>
    </location>
</feature>
<feature type="helix" evidence="2">
    <location>
        <begin position="125"/>
        <end position="127"/>
    </location>
</feature>
<feature type="turn" evidence="2">
    <location>
        <begin position="128"/>
        <end position="130"/>
    </location>
</feature>
<feature type="helix" evidence="2">
    <location>
        <begin position="131"/>
        <end position="136"/>
    </location>
</feature>
<feature type="turn" evidence="2">
    <location>
        <begin position="137"/>
        <end position="139"/>
    </location>
</feature>
<feature type="strand" evidence="2">
    <location>
        <begin position="141"/>
        <end position="145"/>
    </location>
</feature>
<feature type="helix" evidence="2">
    <location>
        <begin position="154"/>
        <end position="170"/>
    </location>
</feature>
<feature type="turn" evidence="2">
    <location>
        <begin position="172"/>
        <end position="174"/>
    </location>
</feature>
<feature type="helix" evidence="2">
    <location>
        <begin position="175"/>
        <end position="177"/>
    </location>
</feature>
<feature type="strand" evidence="2">
    <location>
        <begin position="178"/>
        <end position="188"/>
    </location>
</feature>
<feature type="helix" evidence="2">
    <location>
        <begin position="190"/>
        <end position="201"/>
    </location>
</feature>
<feature type="strand" evidence="2">
    <location>
        <begin position="205"/>
        <end position="212"/>
    </location>
</feature>
<feature type="strand" evidence="2">
    <location>
        <begin position="226"/>
        <end position="231"/>
    </location>
</feature>
<feature type="strand" evidence="2">
    <location>
        <begin position="235"/>
        <end position="237"/>
    </location>
</feature>
<feature type="turn" evidence="2">
    <location>
        <begin position="239"/>
        <end position="242"/>
    </location>
</feature>
<feature type="helix" evidence="2">
    <location>
        <begin position="243"/>
        <end position="249"/>
    </location>
</feature>
<feature type="strand" evidence="2">
    <location>
        <begin position="252"/>
        <end position="259"/>
    </location>
</feature>
<feature type="turn" evidence="2">
    <location>
        <begin position="264"/>
        <end position="267"/>
    </location>
</feature>
<feature type="turn" evidence="2">
    <location>
        <begin position="269"/>
        <end position="272"/>
    </location>
</feature>
<feature type="helix" evidence="2">
    <location>
        <begin position="273"/>
        <end position="289"/>
    </location>
</feature>
<feature type="helix" evidence="2">
    <location>
        <begin position="292"/>
        <end position="297"/>
    </location>
</feature>
<feature type="helix" evidence="2">
    <location>
        <begin position="299"/>
        <end position="301"/>
    </location>
</feature>
<feature type="helix" evidence="2">
    <location>
        <begin position="304"/>
        <end position="306"/>
    </location>
</feature>
<feature type="strand" evidence="2">
    <location>
        <begin position="310"/>
        <end position="317"/>
    </location>
</feature>
<comment type="catalytic activity">
    <reaction>
        <text>a triacylglycerol + H2O = a diacylglycerol + a fatty acid + H(+)</text>
        <dbReference type="Rhea" id="RHEA:12044"/>
        <dbReference type="ChEBI" id="CHEBI:15377"/>
        <dbReference type="ChEBI" id="CHEBI:15378"/>
        <dbReference type="ChEBI" id="CHEBI:17855"/>
        <dbReference type="ChEBI" id="CHEBI:18035"/>
        <dbReference type="ChEBI" id="CHEBI:28868"/>
        <dbReference type="EC" id="3.1.1.3"/>
    </reaction>
</comment>
<comment type="biophysicochemical properties">
    <temperatureDependence>
        <text>Active at temperatures close to 0 degree Celsius.</text>
    </temperatureDependence>
</comment>
<reference key="1">
    <citation type="journal article" date="1990" name="Nucleic Acids Res.">
        <title>Sequence of a lipase gene from the antarctic psychrotroph Moraxella TA144.</title>
        <authorList>
            <person name="Feller G."/>
            <person name="Thiry M."/>
            <person name="Gerday C."/>
        </authorList>
    </citation>
    <scope>NUCLEOTIDE SEQUENCE [GENOMIC DNA]</scope>
</reference>
<proteinExistence type="evidence at protein level"/>
<gene>
    <name type="primary">lip1</name>
    <name type="synonym">L1</name>
</gene>
<keyword id="KW-0002">3D-structure</keyword>
<keyword id="KW-0106">Calcium</keyword>
<keyword id="KW-0378">Hydrolase</keyword>
<keyword id="KW-0442">Lipid degradation</keyword>
<keyword id="KW-0443">Lipid metabolism</keyword>
<keyword id="KW-0479">Metal-binding</keyword>
<organism>
    <name type="scientific">Moraxella sp. (strain TA144)</name>
    <dbReference type="NCBI Taxonomy" id="77152"/>
    <lineage>
        <taxon>Bacteria</taxon>
        <taxon>Pseudomonadati</taxon>
        <taxon>Pseudomonadota</taxon>
        <taxon>Gammaproteobacteria</taxon>
        <taxon>Moraxellales</taxon>
        <taxon>Moraxellaceae</taxon>
        <taxon>Moraxella</taxon>
    </lineage>
</organism>
<protein>
    <recommendedName>
        <fullName>Lipase 1</fullName>
        <ecNumber>3.1.1.3</ecNumber>
    </recommendedName>
    <alternativeName>
        <fullName>Triacylglycerol lipase</fullName>
    </alternativeName>
</protein>
<name>LIP1_MORS1</name>
<evidence type="ECO:0000250" key="1"/>
<evidence type="ECO:0007829" key="2">
    <source>
        <dbReference type="PDB" id="8SPK"/>
    </source>
</evidence>
<sequence>MFIMIKKSELAKAIIVTGALVFSIPTLAEVTLSETTVSSIKSEATVSSTKKALPATPSDCIADSKITAVALSDTRDNGPFSIRTKRISRQSAKGFGGGTIHYPTNASGCGLLGAIAVVPGYVSYENSIKWWGPRLASWGFVVITINTNSIYDDPDSRAAQLNAALDNMIADDTVGSMIDPKRLGAIGWSMGGGGALKLATERSTVRAIMPLAPYHDKSYGEVKTPTLVIACEDDRIAETKKYANAFYKNAIGPKMKVEVNNGSHFCPSYRFNEILLSKPGIAWMQRYINNDTRFDKFLCANENYSKSPRISAYDYKDCP</sequence>
<accession>P19833</accession>